<comment type="function">
    <text evidence="1">Mediates the nuclear export of proteins (cargos) with broad substrate specificity.</text>
</comment>
<comment type="subcellular location">
    <subcellularLocation>
        <location evidence="1">Cytoplasm</location>
    </subcellularLocation>
    <subcellularLocation>
        <location evidence="1">Nucleus</location>
    </subcellularLocation>
</comment>
<comment type="similarity">
    <text evidence="3">Belongs to the exportin family.</text>
</comment>
<protein>
    <recommendedName>
        <fullName>Exportin-7-B</fullName>
    </recommendedName>
</protein>
<sequence length="1087" mass="123341">MADPVQSLAQLEILCKQLYETTDTSTRLQAEKALVEFTNSPECLSKCQLLLERGSSSYSQLLAATCLTKLVSRSTNPLPLEQRIDIRNYVLTYLATRPKLASFVTQALIQLYARITKLGWFDSQKDDFVFRNVIGDVTRFLQDSVEYCVIGVSFLSQLTNEINQADATHPLTKHRKIASSFRDSALFDIFTLSCNLLKQASGKSLLLSDESQHDLLMQLLKLTHNCLNFDFIGTSTDESSDDLCTVQIPTSWRSAFLDSSTLQLFFDLYHSIPPNFTPLVLSCLVQIASVRRSLFNNAERAKFLSHLVDGVKRILENPQSLSDPNNYHEFCRLLARLKSNYQLGELVKVENYPEVIRLIANFTVTSLQHWEFAPNSVHYLLSLWQRLAASVPYVKATEPHLLETYTPEVTKSYVTSRLESVHIILRDGLEDPLEDAGLVQQQLDQLSTIGRCEYDKTCALLVQLFDQSAQTYQELLQSGSAPSMELAVQEGRLTWLVYIIGAVIGGRVSFASTDEQDAMDGELVCRVLQLMNLTDSRLAQAGNEKLELSMLSFFEQFRKIYIGDQVQKSSKLYRRLSDVLGLNDETMVLSIFIGKIITNLKYWGRCEPITSKTLQLLNDLSIGYSSVRKLVKLSAVQFMLNNHTSEHFSFLGINSQSNMSDMRCRTTFYTALGRLLMVDLGEDEEQFSQFMMPLTAAFESLAQMFNSNNFNEQEAKRSLVGLVRDLRGIAFAFNAKSSFMMLFDWIYPAYMPILQRAIELWFHDPACTTPILKLMAELVHNRSQRLQFDVSSPNGILLFRETSKMITTYGNRILTLGELPKEQLYVLKLKGISICFSVLKAALSGNYVNFGVFRLYGDEALDNALQTFVKLLLSVPHSDLLDYPKLSQSYYSLLEVLTQDHMSFIASLEPHVIMYILSSISEGLTALDTMVCTGCCSCLDHIVTYLFKQLSRSGKKRGAPPPQESERFLHIMQQHPEMIQQMLSTVLNIIIFEDCRNQWSMSRPLLGLILLNEKYFSDLRSSIVSSQPPEKQQAMHLCFENLMEGIEGNLLTKNRDRFTQNLSAFRREVNDSMKNSSCGPNSNEMMS</sequence>
<keyword id="KW-0963">Cytoplasm</keyword>
<keyword id="KW-0539">Nucleus</keyword>
<keyword id="KW-0653">Protein transport</keyword>
<keyword id="KW-1185">Reference proteome</keyword>
<keyword id="KW-0813">Transport</keyword>
<reference key="1">
    <citation type="submission" date="2005-04" db="EMBL/GenBank/DDBJ databases">
        <authorList>
            <consortium name="NIH - Xenopus Gene Collection (XGC) project"/>
        </authorList>
    </citation>
    <scope>NUCLEOTIDE SEQUENCE [LARGE SCALE MRNA]</scope>
    <source>
        <tissue>Embryo</tissue>
    </source>
</reference>
<evidence type="ECO:0000250" key="1"/>
<evidence type="ECO:0000255" key="2">
    <source>
        <dbReference type="PROSITE-ProRule" id="PRU00115"/>
    </source>
</evidence>
<evidence type="ECO:0000305" key="3"/>
<accession>Q569Z2</accession>
<gene>
    <name type="primary">xpo7-b</name>
</gene>
<name>XPO7B_XENLA</name>
<organism>
    <name type="scientific">Xenopus laevis</name>
    <name type="common">African clawed frog</name>
    <dbReference type="NCBI Taxonomy" id="8355"/>
    <lineage>
        <taxon>Eukaryota</taxon>
        <taxon>Metazoa</taxon>
        <taxon>Chordata</taxon>
        <taxon>Craniata</taxon>
        <taxon>Vertebrata</taxon>
        <taxon>Euteleostomi</taxon>
        <taxon>Amphibia</taxon>
        <taxon>Batrachia</taxon>
        <taxon>Anura</taxon>
        <taxon>Pipoidea</taxon>
        <taxon>Pipidae</taxon>
        <taxon>Xenopodinae</taxon>
        <taxon>Xenopus</taxon>
        <taxon>Xenopus</taxon>
    </lineage>
</organism>
<proteinExistence type="evidence at transcript level"/>
<feature type="chain" id="PRO_0000237676" description="Exportin-7-B">
    <location>
        <begin position="1"/>
        <end position="1087"/>
    </location>
</feature>
<feature type="domain" description="Importin N-terminal" evidence="2">
    <location>
        <begin position="30"/>
        <end position="96"/>
    </location>
</feature>
<dbReference type="EMBL" id="BC092245">
    <property type="protein sequence ID" value="AAH92245.1"/>
    <property type="molecule type" value="mRNA"/>
</dbReference>
<dbReference type="RefSeq" id="NP_001089345.1">
    <property type="nucleotide sequence ID" value="NM_001095876.1"/>
</dbReference>
<dbReference type="SMR" id="Q569Z2"/>
<dbReference type="DNASU" id="734395"/>
<dbReference type="GeneID" id="734395"/>
<dbReference type="KEGG" id="xla:734395"/>
<dbReference type="AGR" id="Xenbase:XB-GENE-491342"/>
<dbReference type="CTD" id="734395"/>
<dbReference type="Xenbase" id="XB-GENE-491342">
    <property type="gene designation" value="xpo7.L"/>
</dbReference>
<dbReference type="OrthoDB" id="244158at2759"/>
<dbReference type="Proteomes" id="UP000186698">
    <property type="component" value="Chromosome 3L"/>
</dbReference>
<dbReference type="Bgee" id="734395">
    <property type="expression patterns" value="Expressed in testis and 19 other cell types or tissues"/>
</dbReference>
<dbReference type="GO" id="GO:0005737">
    <property type="term" value="C:cytoplasm"/>
    <property type="evidence" value="ECO:0000318"/>
    <property type="project" value="GO_Central"/>
</dbReference>
<dbReference type="GO" id="GO:0005643">
    <property type="term" value="C:nuclear pore"/>
    <property type="evidence" value="ECO:0000318"/>
    <property type="project" value="GO_Central"/>
</dbReference>
<dbReference type="GO" id="GO:0005049">
    <property type="term" value="F:nuclear export signal receptor activity"/>
    <property type="evidence" value="ECO:0000318"/>
    <property type="project" value="GO_Central"/>
</dbReference>
<dbReference type="GO" id="GO:0031267">
    <property type="term" value="F:small GTPase binding"/>
    <property type="evidence" value="ECO:0007669"/>
    <property type="project" value="InterPro"/>
</dbReference>
<dbReference type="GO" id="GO:0006611">
    <property type="term" value="P:protein export from nucleus"/>
    <property type="evidence" value="ECO:0000318"/>
    <property type="project" value="GO_Central"/>
</dbReference>
<dbReference type="FunFam" id="1.25.10.10:FF:000042">
    <property type="entry name" value="exportin-7 isoform X1"/>
    <property type="match status" value="1"/>
</dbReference>
<dbReference type="FunFam" id="1.25.10.10:FF:000059">
    <property type="entry name" value="exportin-7 isoform X2"/>
    <property type="match status" value="1"/>
</dbReference>
<dbReference type="Gene3D" id="1.25.10.10">
    <property type="entry name" value="Leucine-rich Repeat Variant"/>
    <property type="match status" value="2"/>
</dbReference>
<dbReference type="InterPro" id="IPR011989">
    <property type="entry name" value="ARM-like"/>
</dbReference>
<dbReference type="InterPro" id="IPR016024">
    <property type="entry name" value="ARM-type_fold"/>
</dbReference>
<dbReference type="InterPro" id="IPR001494">
    <property type="entry name" value="Importin-beta_N"/>
</dbReference>
<dbReference type="InterPro" id="IPR044189">
    <property type="entry name" value="XPO4/7-like"/>
</dbReference>
<dbReference type="PANTHER" id="PTHR12596">
    <property type="entry name" value="EXPORTIN 4,7-RELATED"/>
    <property type="match status" value="1"/>
</dbReference>
<dbReference type="PANTHER" id="PTHR12596:SF2">
    <property type="entry name" value="EXPORTIN-7 ISOFORM X1"/>
    <property type="match status" value="1"/>
</dbReference>
<dbReference type="Pfam" id="PF03810">
    <property type="entry name" value="IBN_N"/>
    <property type="match status" value="1"/>
</dbReference>
<dbReference type="SMART" id="SM00913">
    <property type="entry name" value="IBN_N"/>
    <property type="match status" value="1"/>
</dbReference>
<dbReference type="SUPFAM" id="SSF48371">
    <property type="entry name" value="ARM repeat"/>
    <property type="match status" value="1"/>
</dbReference>
<dbReference type="PROSITE" id="PS50166">
    <property type="entry name" value="IMPORTIN_B_NT"/>
    <property type="match status" value="1"/>
</dbReference>